<dbReference type="EC" id="3.4.25.1" evidence="1"/>
<dbReference type="EMBL" id="AE004437">
    <property type="protein sequence ID" value="AAG19322.1"/>
    <property type="status" value="ALT_INIT"/>
    <property type="molecule type" value="Genomic_DNA"/>
</dbReference>
<dbReference type="PIR" id="F84244">
    <property type="entry name" value="F84244"/>
</dbReference>
<dbReference type="RefSeq" id="WP_012289244.1">
    <property type="nucleotide sequence ID" value="NC_002607.1"/>
</dbReference>
<dbReference type="SMR" id="Q9HR36"/>
<dbReference type="FunCoup" id="Q9HR36">
    <property type="interactions" value="124"/>
</dbReference>
<dbReference type="STRING" id="64091.VNG_0880G"/>
<dbReference type="MEROPS" id="T01.002"/>
<dbReference type="PaxDb" id="64091-VNG_0880G"/>
<dbReference type="GeneID" id="89349294"/>
<dbReference type="KEGG" id="hal:VNG_0880G"/>
<dbReference type="PATRIC" id="fig|64091.14.peg.675"/>
<dbReference type="HOGENOM" id="CLU_035750_7_2_2"/>
<dbReference type="InParanoid" id="Q9HR36"/>
<dbReference type="OrthoDB" id="6330at2157"/>
<dbReference type="PhylomeDB" id="Q9HR36"/>
<dbReference type="Proteomes" id="UP000000554">
    <property type="component" value="Chromosome"/>
</dbReference>
<dbReference type="GO" id="GO:0005829">
    <property type="term" value="C:cytosol"/>
    <property type="evidence" value="ECO:0000318"/>
    <property type="project" value="GO_Central"/>
</dbReference>
<dbReference type="GO" id="GO:0019774">
    <property type="term" value="C:proteasome core complex, beta-subunit complex"/>
    <property type="evidence" value="ECO:0000318"/>
    <property type="project" value="GO_Central"/>
</dbReference>
<dbReference type="GO" id="GO:0004175">
    <property type="term" value="F:endopeptidase activity"/>
    <property type="evidence" value="ECO:0000318"/>
    <property type="project" value="GO_Central"/>
</dbReference>
<dbReference type="GO" id="GO:0004298">
    <property type="term" value="F:threonine-type endopeptidase activity"/>
    <property type="evidence" value="ECO:0007669"/>
    <property type="project" value="UniProtKB-UniRule"/>
</dbReference>
<dbReference type="GO" id="GO:0043161">
    <property type="term" value="P:proteasome-mediated ubiquitin-dependent protein catabolic process"/>
    <property type="evidence" value="ECO:0000318"/>
    <property type="project" value="GO_Central"/>
</dbReference>
<dbReference type="FunFam" id="3.60.20.10:FF:000049">
    <property type="entry name" value="Proteasome subunit beta"/>
    <property type="match status" value="1"/>
</dbReference>
<dbReference type="Gene3D" id="3.60.20.10">
    <property type="entry name" value="Glutamine Phosphoribosylpyrophosphate, subunit 1, domain 1"/>
    <property type="match status" value="1"/>
</dbReference>
<dbReference type="HAMAP" id="MF_02113_A">
    <property type="entry name" value="Proteasome_B_A"/>
    <property type="match status" value="1"/>
</dbReference>
<dbReference type="InterPro" id="IPR029055">
    <property type="entry name" value="Ntn_hydrolases_N"/>
</dbReference>
<dbReference type="InterPro" id="IPR019983">
    <property type="entry name" value="Pept_T1A_Psome_bsu_arc"/>
</dbReference>
<dbReference type="InterPro" id="IPR000243">
    <property type="entry name" value="Pept_T1A_subB"/>
</dbReference>
<dbReference type="InterPro" id="IPR001353">
    <property type="entry name" value="Proteasome_sua/b"/>
</dbReference>
<dbReference type="InterPro" id="IPR023333">
    <property type="entry name" value="Proteasome_suB-type"/>
</dbReference>
<dbReference type="NCBIfam" id="TIGR03634">
    <property type="entry name" value="arc_protsome_B"/>
    <property type="match status" value="1"/>
</dbReference>
<dbReference type="PANTHER" id="PTHR32194:SF0">
    <property type="entry name" value="ATP-DEPENDENT PROTEASE SUBUNIT HSLV"/>
    <property type="match status" value="1"/>
</dbReference>
<dbReference type="PANTHER" id="PTHR32194">
    <property type="entry name" value="METALLOPROTEASE TLDD"/>
    <property type="match status" value="1"/>
</dbReference>
<dbReference type="Pfam" id="PF00227">
    <property type="entry name" value="Proteasome"/>
    <property type="match status" value="1"/>
</dbReference>
<dbReference type="PRINTS" id="PR00141">
    <property type="entry name" value="PROTEASOME"/>
</dbReference>
<dbReference type="SUPFAM" id="SSF56235">
    <property type="entry name" value="N-terminal nucleophile aminohydrolases (Ntn hydrolases)"/>
    <property type="match status" value="1"/>
</dbReference>
<dbReference type="PROSITE" id="PS51476">
    <property type="entry name" value="PROTEASOME_BETA_2"/>
    <property type="match status" value="1"/>
</dbReference>
<name>PSB_HALSA</name>
<organism>
    <name type="scientific">Halobacterium salinarum (strain ATCC 700922 / JCM 11081 / NRC-1)</name>
    <name type="common">Halobacterium halobium</name>
    <dbReference type="NCBI Taxonomy" id="64091"/>
    <lineage>
        <taxon>Archaea</taxon>
        <taxon>Methanobacteriati</taxon>
        <taxon>Methanobacteriota</taxon>
        <taxon>Stenosarchaea group</taxon>
        <taxon>Halobacteria</taxon>
        <taxon>Halobacteriales</taxon>
        <taxon>Halobacteriaceae</taxon>
        <taxon>Halobacterium</taxon>
        <taxon>Halobacterium salinarum NRC-34001</taxon>
    </lineage>
</organism>
<proteinExistence type="inferred from homology"/>
<evidence type="ECO:0000255" key="1">
    <source>
        <dbReference type="HAMAP-Rule" id="MF_02113"/>
    </source>
</evidence>
<evidence type="ECO:0000256" key="2">
    <source>
        <dbReference type="SAM" id="MobiDB-lite"/>
    </source>
</evidence>
<evidence type="ECO:0000305" key="3"/>
<feature type="propeptide" id="PRO_0000397298" description="Removed in mature form; by autocatalysis" evidence="1">
    <location>
        <begin position="1"/>
        <end position="48"/>
    </location>
</feature>
<feature type="chain" id="PRO_0000397299" description="Proteasome subunit beta">
    <location>
        <begin position="49"/>
        <end position="243"/>
    </location>
</feature>
<feature type="region of interest" description="Disordered" evidence="2">
    <location>
        <begin position="1"/>
        <end position="46"/>
    </location>
</feature>
<feature type="active site" description="Nucleophile" evidence="1">
    <location>
        <position position="49"/>
    </location>
</feature>
<comment type="function">
    <text evidence="1">Component of the proteasome core, a large protease complex with broad specificity involved in protein degradation.</text>
</comment>
<comment type="catalytic activity">
    <reaction evidence="1">
        <text>Cleavage of peptide bonds with very broad specificity.</text>
        <dbReference type="EC" id="3.4.25.1"/>
    </reaction>
</comment>
<comment type="activity regulation">
    <text evidence="1">The formation of the proteasomal ATPase PAN-20S proteasome complex, via the docking of the C-termini of PAN into the intersubunit pockets in the alpha-rings, triggers opening of the gate for substrate entry. Interconversion between the open-gate and close-gate conformations leads to a dynamic regulation of the 20S proteasome proteolysis activity.</text>
</comment>
<comment type="subunit">
    <text evidence="1">The 20S proteasome core is composed of 14 alpha and 14 beta subunits that assemble into four stacked heptameric rings, resulting in a barrel-shaped structure. The two inner rings, each composed of seven catalytic beta subunits, are sandwiched by two outer rings, each composed of seven alpha subunits. The catalytic chamber with the active sites is on the inside of the barrel. Has a gated structure, the ends of the cylinder being occluded by the N-termini of the alpha-subunits. Is capped at one or both ends by the proteasome regulatory ATPase, PAN.</text>
</comment>
<comment type="subcellular location">
    <subcellularLocation>
        <location evidence="1">Cytoplasm</location>
    </subcellularLocation>
</comment>
<comment type="similarity">
    <text evidence="1">Belongs to the peptidase T1B family.</text>
</comment>
<comment type="sequence caution" evidence="3">
    <conflict type="erroneous initiation">
        <sequence resource="EMBL-CDS" id="AAG19322"/>
    </conflict>
    <text>Extended N-terminus.</text>
</comment>
<accession>Q9HR36</accession>
<gene>
    <name evidence="1" type="primary">psmB</name>
    <name type="ordered locus">VNG_0880G</name>
</gene>
<protein>
    <recommendedName>
        <fullName evidence="1">Proteasome subunit beta</fullName>
        <ecNumber evidence="1">3.4.25.1</ecNumber>
    </recommendedName>
    <alternativeName>
        <fullName evidence="1">20S proteasome beta subunit</fullName>
    </alternativeName>
    <alternativeName>
        <fullName evidence="1">Proteasome core protein PsmB</fullName>
    </alternativeName>
</protein>
<reference key="1">
    <citation type="journal article" date="2000" name="Proc. Natl. Acad. Sci. U.S.A.">
        <title>Genome sequence of Halobacterium species NRC-1.</title>
        <authorList>
            <person name="Ng W.V."/>
            <person name="Kennedy S.P."/>
            <person name="Mahairas G.G."/>
            <person name="Berquist B."/>
            <person name="Pan M."/>
            <person name="Shukla H.D."/>
            <person name="Lasky S.R."/>
            <person name="Baliga N.S."/>
            <person name="Thorsson V."/>
            <person name="Sbrogna J."/>
            <person name="Swartzell S."/>
            <person name="Weir D."/>
            <person name="Hall J."/>
            <person name="Dahl T.A."/>
            <person name="Welti R."/>
            <person name="Goo Y.A."/>
            <person name="Leithauser B."/>
            <person name="Keller K."/>
            <person name="Cruz R."/>
            <person name="Danson M.J."/>
            <person name="Hough D.W."/>
            <person name="Maddocks D.G."/>
            <person name="Jablonski P.E."/>
            <person name="Krebs M.P."/>
            <person name="Angevine C.M."/>
            <person name="Dale H."/>
            <person name="Isenbarger T.A."/>
            <person name="Peck R.F."/>
            <person name="Pohlschroder M."/>
            <person name="Spudich J.L."/>
            <person name="Jung K.-H."/>
            <person name="Alam M."/>
            <person name="Freitas T."/>
            <person name="Hou S."/>
            <person name="Daniels C.J."/>
            <person name="Dennis P.P."/>
            <person name="Omer A.D."/>
            <person name="Ebhardt H."/>
            <person name="Lowe T.M."/>
            <person name="Liang P."/>
            <person name="Riley M."/>
            <person name="Hood L."/>
            <person name="DasSarma S."/>
        </authorList>
    </citation>
    <scope>NUCLEOTIDE SEQUENCE [LARGE SCALE GENOMIC DNA]</scope>
    <source>
        <strain>ATCC 700922 / JCM 11081 / NRC-1</strain>
    </source>
</reference>
<sequence length="243" mass="25642">MFNPNNGSEFARNRARLDDTPNPYEPEVGSLPEGDRSQAGSDTVNKTGTTIVGLTTQDGVLMASDMRASLGGRVISNKNVQKVEEIQPNAALSISGSVGGAQSFIRSLRAEANLYEARRGEYMSIDALSTMASNLLRGGPFFRVVPILGGVDDDGGHVFSLDPAGSSMSDTYTAQGSGMPYALGVLEQEYSEDLTMADAEQVAAHAVKSASERDTASGNGIHITKITHDGLTTVGHKEFDALL</sequence>
<keyword id="KW-0068">Autocatalytic cleavage</keyword>
<keyword id="KW-0963">Cytoplasm</keyword>
<keyword id="KW-0378">Hydrolase</keyword>
<keyword id="KW-0645">Protease</keyword>
<keyword id="KW-0647">Proteasome</keyword>
<keyword id="KW-1185">Reference proteome</keyword>
<keyword id="KW-0888">Threonine protease</keyword>
<keyword id="KW-0865">Zymogen</keyword>